<keyword id="KW-0031">Aminopeptidase</keyword>
<keyword id="KW-0963">Cytoplasm</keyword>
<keyword id="KW-0378">Hydrolase</keyword>
<keyword id="KW-0479">Metal-binding</keyword>
<keyword id="KW-0482">Metalloprotease</keyword>
<keyword id="KW-0645">Protease</keyword>
<keyword id="KW-0862">Zinc</keyword>
<accession>Q669P7</accession>
<protein>
    <recommendedName>
        <fullName evidence="1">Peptidase T</fullName>
        <ecNumber evidence="1">3.4.11.4</ecNumber>
    </recommendedName>
    <alternativeName>
        <fullName evidence="1">Aminotripeptidase</fullName>
        <shortName evidence="1">Tripeptidase</shortName>
    </alternativeName>
    <alternativeName>
        <fullName evidence="1">Tripeptide aminopeptidase</fullName>
    </alternativeName>
</protein>
<name>PEPT_YERPS</name>
<organism>
    <name type="scientific">Yersinia pseudotuberculosis serotype I (strain IP32953)</name>
    <dbReference type="NCBI Taxonomy" id="273123"/>
    <lineage>
        <taxon>Bacteria</taxon>
        <taxon>Pseudomonadati</taxon>
        <taxon>Pseudomonadota</taxon>
        <taxon>Gammaproteobacteria</taxon>
        <taxon>Enterobacterales</taxon>
        <taxon>Yersiniaceae</taxon>
        <taxon>Yersinia</taxon>
    </lineage>
</organism>
<reference key="1">
    <citation type="journal article" date="2004" name="Proc. Natl. Acad. Sci. U.S.A.">
        <title>Insights into the evolution of Yersinia pestis through whole-genome comparison with Yersinia pseudotuberculosis.</title>
        <authorList>
            <person name="Chain P.S.G."/>
            <person name="Carniel E."/>
            <person name="Larimer F.W."/>
            <person name="Lamerdin J."/>
            <person name="Stoutland P.O."/>
            <person name="Regala W.M."/>
            <person name="Georgescu A.M."/>
            <person name="Vergez L.M."/>
            <person name="Land M.L."/>
            <person name="Motin V.L."/>
            <person name="Brubaker R.R."/>
            <person name="Fowler J."/>
            <person name="Hinnebusch J."/>
            <person name="Marceau M."/>
            <person name="Medigue C."/>
            <person name="Simonet M."/>
            <person name="Chenal-Francisque V."/>
            <person name="Souza B."/>
            <person name="Dacheux D."/>
            <person name="Elliott J.M."/>
            <person name="Derbise A."/>
            <person name="Hauser L.J."/>
            <person name="Garcia E."/>
        </authorList>
    </citation>
    <scope>NUCLEOTIDE SEQUENCE [LARGE SCALE GENOMIC DNA]</scope>
    <source>
        <strain>IP32953</strain>
    </source>
</reference>
<gene>
    <name evidence="1" type="primary">pepT</name>
    <name type="ordered locus">YPTB2437</name>
</gene>
<sequence>MDKLLDRFFNYVSFDTQAKANVKSVPSTQGQRKLAQALQQELLTLGFSHVTLSDHGCVMATLPANVSWPVPTIGFIAHLDTSPDFSGKNVNPQIVENYRGGDIALGIGDEVLSPVMFPVLHQLLGHTLITTDGKTLLGADDKAGIAEIITAMVRLKHRNVPHGDIRIAFTPDEEVGKGAQFFNVAEFDAQWAYTVDGGGIGELEFENFNAASVAIKIVGNNVHPGSAKGVMVNALSLATRYHQELPVDETPECTEGYDGFYHLQSIKGTVERAEMHYIVRDFNRDSFEARKKNMVDIAKRVGKGLHRDCYIEIVIDDSYYNMREQIIKHPHIIELAQQAMLDCDITPIMKPIRGGTDGAQLSFKGLPCPNIFTGGYNYHGKHEFITLEGMEKAVAVIMRISELTAKRAKES</sequence>
<evidence type="ECO:0000255" key="1">
    <source>
        <dbReference type="HAMAP-Rule" id="MF_00550"/>
    </source>
</evidence>
<comment type="function">
    <text evidence="1">Cleaves the N-terminal amino acid of tripeptides.</text>
</comment>
<comment type="catalytic activity">
    <reaction evidence="1">
        <text>Release of the N-terminal residue from a tripeptide.</text>
        <dbReference type="EC" id="3.4.11.4"/>
    </reaction>
</comment>
<comment type="cofactor">
    <cofactor evidence="1">
        <name>Zn(2+)</name>
        <dbReference type="ChEBI" id="CHEBI:29105"/>
    </cofactor>
    <text evidence="1">Binds 2 Zn(2+) ions per subunit.</text>
</comment>
<comment type="subcellular location">
    <subcellularLocation>
        <location evidence="1">Cytoplasm</location>
    </subcellularLocation>
</comment>
<comment type="similarity">
    <text evidence="1">Belongs to the peptidase M20B family.</text>
</comment>
<feature type="chain" id="PRO_0000185335" description="Peptidase T">
    <location>
        <begin position="1"/>
        <end position="411"/>
    </location>
</feature>
<feature type="active site" evidence="1">
    <location>
        <position position="80"/>
    </location>
</feature>
<feature type="active site" description="Proton acceptor" evidence="1">
    <location>
        <position position="173"/>
    </location>
</feature>
<feature type="binding site" evidence="1">
    <location>
        <position position="78"/>
    </location>
    <ligand>
        <name>Zn(2+)</name>
        <dbReference type="ChEBI" id="CHEBI:29105"/>
        <label>1</label>
    </ligand>
</feature>
<feature type="binding site" evidence="1">
    <location>
        <position position="140"/>
    </location>
    <ligand>
        <name>Zn(2+)</name>
        <dbReference type="ChEBI" id="CHEBI:29105"/>
        <label>1</label>
    </ligand>
</feature>
<feature type="binding site" evidence="1">
    <location>
        <position position="140"/>
    </location>
    <ligand>
        <name>Zn(2+)</name>
        <dbReference type="ChEBI" id="CHEBI:29105"/>
        <label>2</label>
    </ligand>
</feature>
<feature type="binding site" evidence="1">
    <location>
        <position position="174"/>
    </location>
    <ligand>
        <name>Zn(2+)</name>
        <dbReference type="ChEBI" id="CHEBI:29105"/>
        <label>2</label>
    </ligand>
</feature>
<feature type="binding site" evidence="1">
    <location>
        <position position="196"/>
    </location>
    <ligand>
        <name>Zn(2+)</name>
        <dbReference type="ChEBI" id="CHEBI:29105"/>
        <label>1</label>
    </ligand>
</feature>
<feature type="binding site" evidence="1">
    <location>
        <position position="379"/>
    </location>
    <ligand>
        <name>Zn(2+)</name>
        <dbReference type="ChEBI" id="CHEBI:29105"/>
        <label>2</label>
    </ligand>
</feature>
<dbReference type="EC" id="3.4.11.4" evidence="1"/>
<dbReference type="EMBL" id="BX936398">
    <property type="protein sequence ID" value="CAH21675.1"/>
    <property type="molecule type" value="Genomic_DNA"/>
</dbReference>
<dbReference type="RefSeq" id="WP_002210920.1">
    <property type="nucleotide sequence ID" value="NZ_CP009712.1"/>
</dbReference>
<dbReference type="SMR" id="Q669P7"/>
<dbReference type="MEROPS" id="M20.003"/>
<dbReference type="GeneID" id="57976942"/>
<dbReference type="KEGG" id="ypo:BZ17_13"/>
<dbReference type="KEGG" id="yps:YPTB2437"/>
<dbReference type="PATRIC" id="fig|273123.14.peg.14"/>
<dbReference type="Proteomes" id="UP000001011">
    <property type="component" value="Chromosome"/>
</dbReference>
<dbReference type="GO" id="GO:0005829">
    <property type="term" value="C:cytosol"/>
    <property type="evidence" value="ECO:0007669"/>
    <property type="project" value="TreeGrafter"/>
</dbReference>
<dbReference type="GO" id="GO:0008237">
    <property type="term" value="F:metallopeptidase activity"/>
    <property type="evidence" value="ECO:0007669"/>
    <property type="project" value="UniProtKB-KW"/>
</dbReference>
<dbReference type="GO" id="GO:0045148">
    <property type="term" value="F:tripeptide aminopeptidase activity"/>
    <property type="evidence" value="ECO:0007669"/>
    <property type="project" value="UniProtKB-UniRule"/>
</dbReference>
<dbReference type="GO" id="GO:0008270">
    <property type="term" value="F:zinc ion binding"/>
    <property type="evidence" value="ECO:0007669"/>
    <property type="project" value="UniProtKB-UniRule"/>
</dbReference>
<dbReference type="GO" id="GO:0043171">
    <property type="term" value="P:peptide catabolic process"/>
    <property type="evidence" value="ECO:0007669"/>
    <property type="project" value="UniProtKB-UniRule"/>
</dbReference>
<dbReference type="GO" id="GO:0006508">
    <property type="term" value="P:proteolysis"/>
    <property type="evidence" value="ECO:0007669"/>
    <property type="project" value="UniProtKB-UniRule"/>
</dbReference>
<dbReference type="CDD" id="cd03892">
    <property type="entry name" value="M20_peptT"/>
    <property type="match status" value="1"/>
</dbReference>
<dbReference type="FunFam" id="3.30.70.360:FF:000002">
    <property type="entry name" value="Peptidase T"/>
    <property type="match status" value="1"/>
</dbReference>
<dbReference type="Gene3D" id="3.30.70.360">
    <property type="match status" value="1"/>
</dbReference>
<dbReference type="Gene3D" id="3.40.630.10">
    <property type="entry name" value="Zn peptidases"/>
    <property type="match status" value="1"/>
</dbReference>
<dbReference type="HAMAP" id="MF_00550">
    <property type="entry name" value="Aminopeptidase_M20"/>
    <property type="match status" value="1"/>
</dbReference>
<dbReference type="InterPro" id="IPR001261">
    <property type="entry name" value="ArgE/DapE_CS"/>
</dbReference>
<dbReference type="InterPro" id="IPR036264">
    <property type="entry name" value="Bact_exopeptidase_dim_dom"/>
</dbReference>
<dbReference type="InterPro" id="IPR002933">
    <property type="entry name" value="Peptidase_M20"/>
</dbReference>
<dbReference type="InterPro" id="IPR011650">
    <property type="entry name" value="Peptidase_M20_dimer"/>
</dbReference>
<dbReference type="InterPro" id="IPR010161">
    <property type="entry name" value="Peptidase_M20B"/>
</dbReference>
<dbReference type="NCBIfam" id="TIGR01882">
    <property type="entry name" value="peptidase-T"/>
    <property type="match status" value="1"/>
</dbReference>
<dbReference type="NCBIfam" id="NF003976">
    <property type="entry name" value="PRK05469.1"/>
    <property type="match status" value="1"/>
</dbReference>
<dbReference type="NCBIfam" id="NF009920">
    <property type="entry name" value="PRK13381.1"/>
    <property type="match status" value="1"/>
</dbReference>
<dbReference type="PANTHER" id="PTHR42994">
    <property type="entry name" value="PEPTIDASE T"/>
    <property type="match status" value="1"/>
</dbReference>
<dbReference type="PANTHER" id="PTHR42994:SF1">
    <property type="entry name" value="PEPTIDASE T"/>
    <property type="match status" value="1"/>
</dbReference>
<dbReference type="Pfam" id="PF07687">
    <property type="entry name" value="M20_dimer"/>
    <property type="match status" value="1"/>
</dbReference>
<dbReference type="Pfam" id="PF01546">
    <property type="entry name" value="Peptidase_M20"/>
    <property type="match status" value="1"/>
</dbReference>
<dbReference type="PIRSF" id="PIRSF037215">
    <property type="entry name" value="Peptidase_M20B"/>
    <property type="match status" value="1"/>
</dbReference>
<dbReference type="SUPFAM" id="SSF55031">
    <property type="entry name" value="Bacterial exopeptidase dimerisation domain"/>
    <property type="match status" value="1"/>
</dbReference>
<dbReference type="SUPFAM" id="SSF53187">
    <property type="entry name" value="Zn-dependent exopeptidases"/>
    <property type="match status" value="1"/>
</dbReference>
<dbReference type="PROSITE" id="PS00758">
    <property type="entry name" value="ARGE_DAPE_CPG2_1"/>
    <property type="match status" value="1"/>
</dbReference>
<dbReference type="PROSITE" id="PS00759">
    <property type="entry name" value="ARGE_DAPE_CPG2_2"/>
    <property type="match status" value="1"/>
</dbReference>
<proteinExistence type="inferred from homology"/>